<dbReference type="EMBL" id="AE017262">
    <property type="protein sequence ID" value="AAT04855.1"/>
    <property type="molecule type" value="Genomic_DNA"/>
</dbReference>
<dbReference type="RefSeq" id="WP_003726138.1">
    <property type="nucleotide sequence ID" value="NC_002973.6"/>
</dbReference>
<dbReference type="SMR" id="Q71XW0"/>
<dbReference type="KEGG" id="lmf:LMOf2365_2085"/>
<dbReference type="HOGENOM" id="CLU_159890_2_0_9"/>
<dbReference type="GO" id="GO:0005737">
    <property type="term" value="C:cytoplasm"/>
    <property type="evidence" value="ECO:0007669"/>
    <property type="project" value="UniProtKB-SubCell"/>
</dbReference>
<dbReference type="HAMAP" id="MF_01126">
    <property type="entry name" value="UPF0298"/>
    <property type="match status" value="1"/>
</dbReference>
<dbReference type="InterPro" id="IPR016979">
    <property type="entry name" value="DUF2129"/>
</dbReference>
<dbReference type="NCBIfam" id="NF002777">
    <property type="entry name" value="PRK02886.1"/>
    <property type="match status" value="1"/>
</dbReference>
<dbReference type="Pfam" id="PF09902">
    <property type="entry name" value="DUF2129"/>
    <property type="match status" value="1"/>
</dbReference>
<dbReference type="PIRSF" id="PIRSF031653">
    <property type="entry name" value="UCP031653"/>
    <property type="match status" value="1"/>
</dbReference>
<accession>Q71XW0</accession>
<evidence type="ECO:0000255" key="1">
    <source>
        <dbReference type="HAMAP-Rule" id="MF_01126"/>
    </source>
</evidence>
<reference key="1">
    <citation type="journal article" date="2004" name="Nucleic Acids Res.">
        <title>Whole genome comparisons of serotype 4b and 1/2a strains of the food-borne pathogen Listeria monocytogenes reveal new insights into the core genome components of this species.</title>
        <authorList>
            <person name="Nelson K.E."/>
            <person name="Fouts D.E."/>
            <person name="Mongodin E.F."/>
            <person name="Ravel J."/>
            <person name="DeBoy R.T."/>
            <person name="Kolonay J.F."/>
            <person name="Rasko D.A."/>
            <person name="Angiuoli S.V."/>
            <person name="Gill S.R."/>
            <person name="Paulsen I.T."/>
            <person name="Peterson J.D."/>
            <person name="White O."/>
            <person name="Nelson W.C."/>
            <person name="Nierman W.C."/>
            <person name="Beanan M.J."/>
            <person name="Brinkac L.M."/>
            <person name="Daugherty S.C."/>
            <person name="Dodson R.J."/>
            <person name="Durkin A.S."/>
            <person name="Madupu R."/>
            <person name="Haft D.H."/>
            <person name="Selengut J."/>
            <person name="Van Aken S.E."/>
            <person name="Khouri H.M."/>
            <person name="Fedorova N."/>
            <person name="Forberger H.A."/>
            <person name="Tran B."/>
            <person name="Kathariou S."/>
            <person name="Wonderling L.D."/>
            <person name="Uhlich G.A."/>
            <person name="Bayles D.O."/>
            <person name="Luchansky J.B."/>
            <person name="Fraser C.M."/>
        </authorList>
    </citation>
    <scope>NUCLEOTIDE SEQUENCE [LARGE SCALE GENOMIC DNA]</scope>
    <source>
        <strain>F2365</strain>
    </source>
</reference>
<gene>
    <name type="ordered locus">LMOf2365_2085</name>
</gene>
<feature type="chain" id="PRO_0000074663" description="UPF0298 protein LMOf2365_2085">
    <location>
        <begin position="1"/>
        <end position="93"/>
    </location>
</feature>
<protein>
    <recommendedName>
        <fullName evidence="1">UPF0298 protein LMOf2365_2085</fullName>
    </recommendedName>
</protein>
<comment type="subcellular location">
    <subcellularLocation>
        <location evidence="1">Cytoplasm</location>
    </subcellularLocation>
</comment>
<comment type="similarity">
    <text evidence="1">Belongs to the UPF0298 family.</text>
</comment>
<proteinExistence type="inferred from homology"/>
<sequence length="93" mass="11350">MENDRQAIVVWMNHLKQVRSLKRFGNVHYVSRKLKYAVLYCDMAEVEDISNKVSRFHYVKRVEMSFRPFLKTEYESKKEMMYEHKNEDVQISI</sequence>
<organism>
    <name type="scientific">Listeria monocytogenes serotype 4b (strain F2365)</name>
    <dbReference type="NCBI Taxonomy" id="265669"/>
    <lineage>
        <taxon>Bacteria</taxon>
        <taxon>Bacillati</taxon>
        <taxon>Bacillota</taxon>
        <taxon>Bacilli</taxon>
        <taxon>Bacillales</taxon>
        <taxon>Listeriaceae</taxon>
        <taxon>Listeria</taxon>
    </lineage>
</organism>
<keyword id="KW-0963">Cytoplasm</keyword>
<name>Y2085_LISMF</name>